<protein>
    <recommendedName>
        <fullName>UPF0382 membrane protein C1782.12c</fullName>
    </recommendedName>
</protein>
<evidence type="ECO:0000255" key="1"/>
<evidence type="ECO:0000269" key="2">
    <source>
    </source>
</evidence>
<evidence type="ECO:0000305" key="3"/>
<comment type="subcellular location">
    <subcellularLocation>
        <location evidence="2">Endoplasmic reticulum membrane</location>
        <topology evidence="2">Multi-pass membrane protein</topology>
    </subcellularLocation>
</comment>
<comment type="similarity">
    <text evidence="3">Belongs to the UPF0382 family.</text>
</comment>
<reference key="1">
    <citation type="journal article" date="2002" name="Nature">
        <title>The genome sequence of Schizosaccharomyces pombe.</title>
        <authorList>
            <person name="Wood V."/>
            <person name="Gwilliam R."/>
            <person name="Rajandream M.A."/>
            <person name="Lyne M.H."/>
            <person name="Lyne R."/>
            <person name="Stewart A."/>
            <person name="Sgouros J.G."/>
            <person name="Peat N."/>
            <person name="Hayles J."/>
            <person name="Baker S.G."/>
            <person name="Basham D."/>
            <person name="Bowman S."/>
            <person name="Brooks K."/>
            <person name="Brown D."/>
            <person name="Brown S."/>
            <person name="Chillingworth T."/>
            <person name="Churcher C.M."/>
            <person name="Collins M."/>
            <person name="Connor R."/>
            <person name="Cronin A."/>
            <person name="Davis P."/>
            <person name="Feltwell T."/>
            <person name="Fraser A."/>
            <person name="Gentles S."/>
            <person name="Goble A."/>
            <person name="Hamlin N."/>
            <person name="Harris D.E."/>
            <person name="Hidalgo J."/>
            <person name="Hodgson G."/>
            <person name="Holroyd S."/>
            <person name="Hornsby T."/>
            <person name="Howarth S."/>
            <person name="Huckle E.J."/>
            <person name="Hunt S."/>
            <person name="Jagels K."/>
            <person name="James K.D."/>
            <person name="Jones L."/>
            <person name="Jones M."/>
            <person name="Leather S."/>
            <person name="McDonald S."/>
            <person name="McLean J."/>
            <person name="Mooney P."/>
            <person name="Moule S."/>
            <person name="Mungall K.L."/>
            <person name="Murphy L.D."/>
            <person name="Niblett D."/>
            <person name="Odell C."/>
            <person name="Oliver K."/>
            <person name="O'Neil S."/>
            <person name="Pearson D."/>
            <person name="Quail M.A."/>
            <person name="Rabbinowitsch E."/>
            <person name="Rutherford K.M."/>
            <person name="Rutter S."/>
            <person name="Saunders D."/>
            <person name="Seeger K."/>
            <person name="Sharp S."/>
            <person name="Skelton J."/>
            <person name="Simmonds M.N."/>
            <person name="Squares R."/>
            <person name="Squares S."/>
            <person name="Stevens K."/>
            <person name="Taylor K."/>
            <person name="Taylor R.G."/>
            <person name="Tivey A."/>
            <person name="Walsh S.V."/>
            <person name="Warren T."/>
            <person name="Whitehead S."/>
            <person name="Woodward J.R."/>
            <person name="Volckaert G."/>
            <person name="Aert R."/>
            <person name="Robben J."/>
            <person name="Grymonprez B."/>
            <person name="Weltjens I."/>
            <person name="Vanstreels E."/>
            <person name="Rieger M."/>
            <person name="Schaefer M."/>
            <person name="Mueller-Auer S."/>
            <person name="Gabel C."/>
            <person name="Fuchs M."/>
            <person name="Duesterhoeft A."/>
            <person name="Fritzc C."/>
            <person name="Holzer E."/>
            <person name="Moestl D."/>
            <person name="Hilbert H."/>
            <person name="Borzym K."/>
            <person name="Langer I."/>
            <person name="Beck A."/>
            <person name="Lehrach H."/>
            <person name="Reinhardt R."/>
            <person name="Pohl T.M."/>
            <person name="Eger P."/>
            <person name="Zimmermann W."/>
            <person name="Wedler H."/>
            <person name="Wambutt R."/>
            <person name="Purnelle B."/>
            <person name="Goffeau A."/>
            <person name="Cadieu E."/>
            <person name="Dreano S."/>
            <person name="Gloux S."/>
            <person name="Lelaure V."/>
            <person name="Mottier S."/>
            <person name="Galibert F."/>
            <person name="Aves S.J."/>
            <person name="Xiang Z."/>
            <person name="Hunt C."/>
            <person name="Moore K."/>
            <person name="Hurst S.M."/>
            <person name="Lucas M."/>
            <person name="Rochet M."/>
            <person name="Gaillardin C."/>
            <person name="Tallada V.A."/>
            <person name="Garzon A."/>
            <person name="Thode G."/>
            <person name="Daga R.R."/>
            <person name="Cruzado L."/>
            <person name="Jimenez J."/>
            <person name="Sanchez M."/>
            <person name="del Rey F."/>
            <person name="Benito J."/>
            <person name="Dominguez A."/>
            <person name="Revuelta J.L."/>
            <person name="Moreno S."/>
            <person name="Armstrong J."/>
            <person name="Forsburg S.L."/>
            <person name="Cerutti L."/>
            <person name="Lowe T."/>
            <person name="McCombie W.R."/>
            <person name="Paulsen I."/>
            <person name="Potashkin J."/>
            <person name="Shpakovski G.V."/>
            <person name="Ussery D."/>
            <person name="Barrell B.G."/>
            <person name="Nurse P."/>
        </authorList>
    </citation>
    <scope>NUCLEOTIDE SEQUENCE [LARGE SCALE GENOMIC DNA]</scope>
    <source>
        <strain>972 / ATCC 24843</strain>
    </source>
</reference>
<reference key="2">
    <citation type="journal article" date="2006" name="Nat. Biotechnol.">
        <title>ORFeome cloning and global analysis of protein localization in the fission yeast Schizosaccharomyces pombe.</title>
        <authorList>
            <person name="Matsuyama A."/>
            <person name="Arai R."/>
            <person name="Yashiroda Y."/>
            <person name="Shirai A."/>
            <person name="Kamata A."/>
            <person name="Sekido S."/>
            <person name="Kobayashi Y."/>
            <person name="Hashimoto A."/>
            <person name="Hamamoto M."/>
            <person name="Hiraoka Y."/>
            <person name="Horinouchi S."/>
            <person name="Yoshida M."/>
        </authorList>
    </citation>
    <scope>SUBCELLULAR LOCATION [LARGE SCALE ANALYSIS]</scope>
</reference>
<gene>
    <name type="ORF">SPAC1782.12c</name>
</gene>
<name>YLKC_SCHPO</name>
<proteinExistence type="inferred from homology"/>
<sequence length="118" mass="12652">MTIWNVAALTGLLSVGLGAYGSHGLQKRVQDPHLLKSWSTACTYLMFHSLATMAVSLHPVYGKSRWTGPLLITGSCLFSGTIYGLCLLPKGHSLRRILGPLTPIGGLVMLTGWATMLV</sequence>
<keyword id="KW-0256">Endoplasmic reticulum</keyword>
<keyword id="KW-0472">Membrane</keyword>
<keyword id="KW-1185">Reference proteome</keyword>
<keyword id="KW-0732">Signal</keyword>
<keyword id="KW-0812">Transmembrane</keyword>
<keyword id="KW-1133">Transmembrane helix</keyword>
<dbReference type="EMBL" id="CU329670">
    <property type="protein sequence ID" value="CAB76274.1"/>
    <property type="molecule type" value="Genomic_DNA"/>
</dbReference>
<dbReference type="PIR" id="T50102">
    <property type="entry name" value="T50102"/>
</dbReference>
<dbReference type="RefSeq" id="NP_594719.1">
    <property type="nucleotide sequence ID" value="NM_001020146.2"/>
</dbReference>
<dbReference type="BioGRID" id="278825">
    <property type="interactions" value="2"/>
</dbReference>
<dbReference type="FunCoup" id="Q9P7G8">
    <property type="interactions" value="54"/>
</dbReference>
<dbReference type="PaxDb" id="4896-SPAC1782.12c.1"/>
<dbReference type="EnsemblFungi" id="SPAC1782.12c.1">
    <property type="protein sequence ID" value="SPAC1782.12c.1:pep"/>
    <property type="gene ID" value="SPAC1782.12c"/>
</dbReference>
<dbReference type="PomBase" id="SPAC1782.12c"/>
<dbReference type="VEuPathDB" id="FungiDB:SPAC1782.12c"/>
<dbReference type="eggNOG" id="KOG3472">
    <property type="taxonomic scope" value="Eukaryota"/>
</dbReference>
<dbReference type="HOGENOM" id="CLU_096548_0_2_1"/>
<dbReference type="InParanoid" id="Q9P7G8"/>
<dbReference type="OMA" id="VEYQFYH"/>
<dbReference type="PhylomeDB" id="Q9P7G8"/>
<dbReference type="PRO" id="PR:Q9P7G8"/>
<dbReference type="Proteomes" id="UP000002485">
    <property type="component" value="Chromosome I"/>
</dbReference>
<dbReference type="GO" id="GO:0005783">
    <property type="term" value="C:endoplasmic reticulum"/>
    <property type="evidence" value="ECO:0007005"/>
    <property type="project" value="PomBase"/>
</dbReference>
<dbReference type="GO" id="GO:0005789">
    <property type="term" value="C:endoplasmic reticulum membrane"/>
    <property type="evidence" value="ECO:0007669"/>
    <property type="project" value="UniProtKB-SubCell"/>
</dbReference>
<dbReference type="GO" id="GO:0016020">
    <property type="term" value="C:membrane"/>
    <property type="evidence" value="ECO:0000318"/>
    <property type="project" value="GO_Central"/>
</dbReference>
<dbReference type="InterPro" id="IPR006696">
    <property type="entry name" value="DUF423"/>
</dbReference>
<dbReference type="PANTHER" id="PTHR43461">
    <property type="entry name" value="TRANSMEMBRANE PROTEIN 256"/>
    <property type="match status" value="1"/>
</dbReference>
<dbReference type="PANTHER" id="PTHR43461:SF1">
    <property type="entry name" value="TRANSMEMBRANE PROTEIN 256"/>
    <property type="match status" value="1"/>
</dbReference>
<dbReference type="Pfam" id="PF04241">
    <property type="entry name" value="DUF423"/>
    <property type="match status" value="1"/>
</dbReference>
<organism>
    <name type="scientific">Schizosaccharomyces pombe (strain 972 / ATCC 24843)</name>
    <name type="common">Fission yeast</name>
    <dbReference type="NCBI Taxonomy" id="284812"/>
    <lineage>
        <taxon>Eukaryota</taxon>
        <taxon>Fungi</taxon>
        <taxon>Dikarya</taxon>
        <taxon>Ascomycota</taxon>
        <taxon>Taphrinomycotina</taxon>
        <taxon>Schizosaccharomycetes</taxon>
        <taxon>Schizosaccharomycetales</taxon>
        <taxon>Schizosaccharomycetaceae</taxon>
        <taxon>Schizosaccharomyces</taxon>
    </lineage>
</organism>
<feature type="signal peptide" evidence="1">
    <location>
        <begin position="1"/>
        <end position="18"/>
    </location>
</feature>
<feature type="chain" id="PRO_0000316613" description="UPF0382 membrane protein C1782.12c">
    <location>
        <begin position="19"/>
        <end position="118"/>
    </location>
</feature>
<feature type="topological domain" description="Lumenal" evidence="1">
    <location>
        <begin position="19"/>
        <end position="40"/>
    </location>
</feature>
<feature type="transmembrane region" description="Helical" evidence="1">
    <location>
        <begin position="41"/>
        <end position="61"/>
    </location>
</feature>
<feature type="topological domain" description="Cytoplasmic" evidence="1">
    <location>
        <begin position="62"/>
        <end position="67"/>
    </location>
</feature>
<feature type="transmembrane region" description="Helical" evidence="1">
    <location>
        <begin position="68"/>
        <end position="88"/>
    </location>
</feature>
<feature type="topological domain" description="Lumenal" evidence="1">
    <location>
        <begin position="89"/>
        <end position="96"/>
    </location>
</feature>
<feature type="transmembrane region" description="Helical" evidence="1">
    <location>
        <begin position="97"/>
        <end position="117"/>
    </location>
</feature>
<feature type="topological domain" description="Cytoplasmic" evidence="1">
    <location>
        <position position="118"/>
    </location>
</feature>
<accession>Q9P7G8</accession>